<name>COAD_BLOPB</name>
<evidence type="ECO:0000255" key="1">
    <source>
        <dbReference type="HAMAP-Rule" id="MF_00151"/>
    </source>
</evidence>
<proteinExistence type="inferred from homology"/>
<reference key="1">
    <citation type="journal article" date="2005" name="Genome Res.">
        <title>Genome sequence of Blochmannia pennsylvanicus indicates parallel evolutionary trends among bacterial mutualists of insects.</title>
        <authorList>
            <person name="Degnan P.H."/>
            <person name="Lazarus A.B."/>
            <person name="Wernegreen J.J."/>
        </authorList>
    </citation>
    <scope>NUCLEOTIDE SEQUENCE [LARGE SCALE GENOMIC DNA]</scope>
    <source>
        <strain>BPEN</strain>
    </source>
</reference>
<protein>
    <recommendedName>
        <fullName evidence="1">Phosphopantetheine adenylyltransferase</fullName>
        <ecNumber evidence="1">2.7.7.3</ecNumber>
    </recommendedName>
    <alternativeName>
        <fullName evidence="1">Dephospho-CoA pyrophosphorylase</fullName>
    </alternativeName>
    <alternativeName>
        <fullName evidence="1">Pantetheine-phosphate adenylyltransferase</fullName>
        <shortName evidence="1">PPAT</shortName>
    </alternativeName>
</protein>
<accession>Q491X2</accession>
<organism>
    <name type="scientific">Blochmanniella pennsylvanica (strain BPEN)</name>
    <dbReference type="NCBI Taxonomy" id="291272"/>
    <lineage>
        <taxon>Bacteria</taxon>
        <taxon>Pseudomonadati</taxon>
        <taxon>Pseudomonadota</taxon>
        <taxon>Gammaproteobacteria</taxon>
        <taxon>Enterobacterales</taxon>
        <taxon>Enterobacteriaceae</taxon>
        <taxon>ant endosymbionts</taxon>
        <taxon>Candidatus Blochmanniella</taxon>
    </lineage>
</organism>
<comment type="function">
    <text evidence="1">Reversibly transfers an adenylyl group from ATP to 4'-phosphopantetheine, yielding dephospho-CoA (dPCoA) and pyrophosphate.</text>
</comment>
<comment type="catalytic activity">
    <reaction evidence="1">
        <text>(R)-4'-phosphopantetheine + ATP + H(+) = 3'-dephospho-CoA + diphosphate</text>
        <dbReference type="Rhea" id="RHEA:19801"/>
        <dbReference type="ChEBI" id="CHEBI:15378"/>
        <dbReference type="ChEBI" id="CHEBI:30616"/>
        <dbReference type="ChEBI" id="CHEBI:33019"/>
        <dbReference type="ChEBI" id="CHEBI:57328"/>
        <dbReference type="ChEBI" id="CHEBI:61723"/>
        <dbReference type="EC" id="2.7.7.3"/>
    </reaction>
</comment>
<comment type="cofactor">
    <cofactor evidence="1">
        <name>Mg(2+)</name>
        <dbReference type="ChEBI" id="CHEBI:18420"/>
    </cofactor>
</comment>
<comment type="pathway">
    <text evidence="1">Cofactor biosynthesis; coenzyme A biosynthesis; CoA from (R)-pantothenate: step 4/5.</text>
</comment>
<comment type="subunit">
    <text evidence="1">Homohexamer.</text>
</comment>
<comment type="subcellular location">
    <subcellularLocation>
        <location evidence="1">Cytoplasm</location>
    </subcellularLocation>
</comment>
<comment type="similarity">
    <text evidence="1">Belongs to the bacterial CoaD family.</text>
</comment>
<dbReference type="EC" id="2.7.7.3" evidence="1"/>
<dbReference type="EMBL" id="CP000016">
    <property type="protein sequence ID" value="AAZ41232.1"/>
    <property type="molecule type" value="Genomic_DNA"/>
</dbReference>
<dbReference type="RefSeq" id="WP_011283143.1">
    <property type="nucleotide sequence ID" value="NC_007292.1"/>
</dbReference>
<dbReference type="SMR" id="Q491X2"/>
<dbReference type="STRING" id="291272.BPEN_634"/>
<dbReference type="KEGG" id="bpn:BPEN_634"/>
<dbReference type="eggNOG" id="COG0669">
    <property type="taxonomic scope" value="Bacteria"/>
</dbReference>
<dbReference type="HOGENOM" id="CLU_100149_0_1_6"/>
<dbReference type="OrthoDB" id="9806661at2"/>
<dbReference type="UniPathway" id="UPA00241">
    <property type="reaction ID" value="UER00355"/>
</dbReference>
<dbReference type="Proteomes" id="UP000007794">
    <property type="component" value="Chromosome"/>
</dbReference>
<dbReference type="GO" id="GO:0005737">
    <property type="term" value="C:cytoplasm"/>
    <property type="evidence" value="ECO:0007669"/>
    <property type="project" value="UniProtKB-SubCell"/>
</dbReference>
<dbReference type="GO" id="GO:0005524">
    <property type="term" value="F:ATP binding"/>
    <property type="evidence" value="ECO:0007669"/>
    <property type="project" value="UniProtKB-KW"/>
</dbReference>
<dbReference type="GO" id="GO:0004595">
    <property type="term" value="F:pantetheine-phosphate adenylyltransferase activity"/>
    <property type="evidence" value="ECO:0007669"/>
    <property type="project" value="UniProtKB-UniRule"/>
</dbReference>
<dbReference type="GO" id="GO:0015937">
    <property type="term" value="P:coenzyme A biosynthetic process"/>
    <property type="evidence" value="ECO:0007669"/>
    <property type="project" value="UniProtKB-UniRule"/>
</dbReference>
<dbReference type="CDD" id="cd02163">
    <property type="entry name" value="PPAT"/>
    <property type="match status" value="1"/>
</dbReference>
<dbReference type="Gene3D" id="3.40.50.620">
    <property type="entry name" value="HUPs"/>
    <property type="match status" value="1"/>
</dbReference>
<dbReference type="HAMAP" id="MF_00151">
    <property type="entry name" value="PPAT_bact"/>
    <property type="match status" value="1"/>
</dbReference>
<dbReference type="InterPro" id="IPR004821">
    <property type="entry name" value="Cyt_trans-like"/>
</dbReference>
<dbReference type="InterPro" id="IPR001980">
    <property type="entry name" value="PPAT"/>
</dbReference>
<dbReference type="InterPro" id="IPR014729">
    <property type="entry name" value="Rossmann-like_a/b/a_fold"/>
</dbReference>
<dbReference type="NCBIfam" id="TIGR01510">
    <property type="entry name" value="coaD_prev_kdtB"/>
    <property type="match status" value="1"/>
</dbReference>
<dbReference type="NCBIfam" id="TIGR00125">
    <property type="entry name" value="cyt_tran_rel"/>
    <property type="match status" value="1"/>
</dbReference>
<dbReference type="PANTHER" id="PTHR21342">
    <property type="entry name" value="PHOSPHOPANTETHEINE ADENYLYLTRANSFERASE"/>
    <property type="match status" value="1"/>
</dbReference>
<dbReference type="PANTHER" id="PTHR21342:SF1">
    <property type="entry name" value="PHOSPHOPANTETHEINE ADENYLYLTRANSFERASE"/>
    <property type="match status" value="1"/>
</dbReference>
<dbReference type="Pfam" id="PF01467">
    <property type="entry name" value="CTP_transf_like"/>
    <property type="match status" value="1"/>
</dbReference>
<dbReference type="PRINTS" id="PR01020">
    <property type="entry name" value="LPSBIOSNTHSS"/>
</dbReference>
<dbReference type="SUPFAM" id="SSF52374">
    <property type="entry name" value="Nucleotidylyl transferase"/>
    <property type="match status" value="1"/>
</dbReference>
<feature type="chain" id="PRO_1000058159" description="Phosphopantetheine adenylyltransferase">
    <location>
        <begin position="1"/>
        <end position="171"/>
    </location>
</feature>
<feature type="binding site" evidence="1">
    <location>
        <begin position="10"/>
        <end position="11"/>
    </location>
    <ligand>
        <name>ATP</name>
        <dbReference type="ChEBI" id="CHEBI:30616"/>
    </ligand>
</feature>
<feature type="binding site" evidence="1">
    <location>
        <position position="10"/>
    </location>
    <ligand>
        <name>substrate</name>
    </ligand>
</feature>
<feature type="binding site" evidence="1">
    <location>
        <position position="18"/>
    </location>
    <ligand>
        <name>ATP</name>
        <dbReference type="ChEBI" id="CHEBI:30616"/>
    </ligand>
</feature>
<feature type="binding site" evidence="1">
    <location>
        <position position="42"/>
    </location>
    <ligand>
        <name>substrate</name>
    </ligand>
</feature>
<feature type="binding site" evidence="1">
    <location>
        <position position="74"/>
    </location>
    <ligand>
        <name>substrate</name>
    </ligand>
</feature>
<feature type="binding site" evidence="1">
    <location>
        <position position="88"/>
    </location>
    <ligand>
        <name>substrate</name>
    </ligand>
</feature>
<feature type="binding site" evidence="1">
    <location>
        <begin position="89"/>
        <end position="91"/>
    </location>
    <ligand>
        <name>ATP</name>
        <dbReference type="ChEBI" id="CHEBI:30616"/>
    </ligand>
</feature>
<feature type="binding site" evidence="1">
    <location>
        <position position="99"/>
    </location>
    <ligand>
        <name>ATP</name>
        <dbReference type="ChEBI" id="CHEBI:30616"/>
    </ligand>
</feature>
<feature type="binding site" evidence="1">
    <location>
        <begin position="124"/>
        <end position="130"/>
    </location>
    <ligand>
        <name>ATP</name>
        <dbReference type="ChEBI" id="CHEBI:30616"/>
    </ligand>
</feature>
<feature type="site" description="Transition state stabilizer" evidence="1">
    <location>
        <position position="18"/>
    </location>
</feature>
<sequence>MTIQAMYPGTFDPLTYGHLDIIIRAHKIFDKIFLAVAENSQKHPLFSLEERVIFAKQATAMLDYVTVFGFNDLTINVMKKKQVNILIRGLRNRSDFEYEIQLAKINNYFSNEVETVFMISTDIWACLSSKLVKEIAQYGGRIDHFIPNFIVEKVIEKLRNTEKKNKNISFL</sequence>
<gene>
    <name evidence="1" type="primary">coaD</name>
    <name type="ordered locus">BPEN_634</name>
</gene>
<keyword id="KW-0067">ATP-binding</keyword>
<keyword id="KW-0173">Coenzyme A biosynthesis</keyword>
<keyword id="KW-0963">Cytoplasm</keyword>
<keyword id="KW-0460">Magnesium</keyword>
<keyword id="KW-0547">Nucleotide-binding</keyword>
<keyword id="KW-0548">Nucleotidyltransferase</keyword>
<keyword id="KW-1185">Reference proteome</keyword>
<keyword id="KW-0808">Transferase</keyword>